<reference key="1">
    <citation type="journal article" date="2006" name="BMC Genomics">
        <title>Complete genome sequence of Shigella flexneri 5b and comparison with Shigella flexneri 2a.</title>
        <authorList>
            <person name="Nie H."/>
            <person name="Yang F."/>
            <person name="Zhang X."/>
            <person name="Yang J."/>
            <person name="Chen L."/>
            <person name="Wang J."/>
            <person name="Xiong Z."/>
            <person name="Peng J."/>
            <person name="Sun L."/>
            <person name="Dong J."/>
            <person name="Xue Y."/>
            <person name="Xu X."/>
            <person name="Chen S."/>
            <person name="Yao Z."/>
            <person name="Shen Y."/>
            <person name="Jin Q."/>
        </authorList>
    </citation>
    <scope>NUCLEOTIDE SEQUENCE [LARGE SCALE GENOMIC DNA]</scope>
    <source>
        <strain>8401</strain>
    </source>
</reference>
<comment type="catalytic activity">
    <reaction evidence="1">
        <text>L-citrulline + L-aspartate + ATP = 2-(N(omega)-L-arginino)succinate + AMP + diphosphate + H(+)</text>
        <dbReference type="Rhea" id="RHEA:10932"/>
        <dbReference type="ChEBI" id="CHEBI:15378"/>
        <dbReference type="ChEBI" id="CHEBI:29991"/>
        <dbReference type="ChEBI" id="CHEBI:30616"/>
        <dbReference type="ChEBI" id="CHEBI:33019"/>
        <dbReference type="ChEBI" id="CHEBI:57472"/>
        <dbReference type="ChEBI" id="CHEBI:57743"/>
        <dbReference type="ChEBI" id="CHEBI:456215"/>
        <dbReference type="EC" id="6.3.4.5"/>
    </reaction>
</comment>
<comment type="pathway">
    <text evidence="1">Amino-acid biosynthesis; L-arginine biosynthesis; L-arginine from L-ornithine and carbamoyl phosphate: step 2/3.</text>
</comment>
<comment type="subunit">
    <text evidence="1">Homotetramer.</text>
</comment>
<comment type="subcellular location">
    <subcellularLocation>
        <location evidence="1">Cytoplasm</location>
    </subcellularLocation>
</comment>
<comment type="similarity">
    <text evidence="1">Belongs to the argininosuccinate synthase family. Type 2 subfamily.</text>
</comment>
<organism>
    <name type="scientific">Shigella flexneri serotype 5b (strain 8401)</name>
    <dbReference type="NCBI Taxonomy" id="373384"/>
    <lineage>
        <taxon>Bacteria</taxon>
        <taxon>Pseudomonadati</taxon>
        <taxon>Pseudomonadota</taxon>
        <taxon>Gammaproteobacteria</taxon>
        <taxon>Enterobacterales</taxon>
        <taxon>Enterobacteriaceae</taxon>
        <taxon>Shigella</taxon>
    </lineage>
</organism>
<dbReference type="EC" id="6.3.4.5" evidence="1"/>
<dbReference type="EMBL" id="CP000266">
    <property type="protein sequence ID" value="ABF05255.1"/>
    <property type="molecule type" value="Genomic_DNA"/>
</dbReference>
<dbReference type="RefSeq" id="WP_000207682.1">
    <property type="nucleotide sequence ID" value="NC_008258.1"/>
</dbReference>
<dbReference type="SMR" id="Q0T0B0"/>
<dbReference type="KEGG" id="sfv:SFV_3202"/>
<dbReference type="HOGENOM" id="CLU_032784_4_1_6"/>
<dbReference type="UniPathway" id="UPA00068">
    <property type="reaction ID" value="UER00113"/>
</dbReference>
<dbReference type="Proteomes" id="UP000000659">
    <property type="component" value="Chromosome"/>
</dbReference>
<dbReference type="GO" id="GO:0005737">
    <property type="term" value="C:cytoplasm"/>
    <property type="evidence" value="ECO:0007669"/>
    <property type="project" value="UniProtKB-SubCell"/>
</dbReference>
<dbReference type="GO" id="GO:0004055">
    <property type="term" value="F:argininosuccinate synthase activity"/>
    <property type="evidence" value="ECO:0007669"/>
    <property type="project" value="UniProtKB-UniRule"/>
</dbReference>
<dbReference type="GO" id="GO:0005524">
    <property type="term" value="F:ATP binding"/>
    <property type="evidence" value="ECO:0007669"/>
    <property type="project" value="UniProtKB-UniRule"/>
</dbReference>
<dbReference type="GO" id="GO:0042803">
    <property type="term" value="F:protein homodimerization activity"/>
    <property type="evidence" value="ECO:0007669"/>
    <property type="project" value="InterPro"/>
</dbReference>
<dbReference type="GO" id="GO:0000053">
    <property type="term" value="P:argininosuccinate metabolic process"/>
    <property type="evidence" value="ECO:0007669"/>
    <property type="project" value="TreeGrafter"/>
</dbReference>
<dbReference type="GO" id="GO:0006526">
    <property type="term" value="P:L-arginine biosynthetic process"/>
    <property type="evidence" value="ECO:0007669"/>
    <property type="project" value="UniProtKB-UniRule"/>
</dbReference>
<dbReference type="GO" id="GO:0000050">
    <property type="term" value="P:urea cycle"/>
    <property type="evidence" value="ECO:0007669"/>
    <property type="project" value="TreeGrafter"/>
</dbReference>
<dbReference type="CDD" id="cd01999">
    <property type="entry name" value="ASS"/>
    <property type="match status" value="1"/>
</dbReference>
<dbReference type="FunFam" id="1.10.287.400:FF:000001">
    <property type="entry name" value="Argininosuccinate synthase"/>
    <property type="match status" value="1"/>
</dbReference>
<dbReference type="Gene3D" id="1.10.287.400">
    <property type="match status" value="1"/>
</dbReference>
<dbReference type="Gene3D" id="3.90.1260.10">
    <property type="entry name" value="Argininosuccinate synthetase, chain A, domain 2"/>
    <property type="match status" value="1"/>
</dbReference>
<dbReference type="Gene3D" id="3.40.50.620">
    <property type="entry name" value="HUPs"/>
    <property type="match status" value="1"/>
</dbReference>
<dbReference type="HAMAP" id="MF_00581">
    <property type="entry name" value="Arg_succ_synth_type2"/>
    <property type="match status" value="1"/>
</dbReference>
<dbReference type="InterPro" id="IPR023437">
    <property type="entry name" value="Arg_succ_synth_type2_subfam"/>
</dbReference>
<dbReference type="InterPro" id="IPR048268">
    <property type="entry name" value="Arginosuc_syn_C"/>
</dbReference>
<dbReference type="InterPro" id="IPR048267">
    <property type="entry name" value="Arginosuc_syn_N"/>
</dbReference>
<dbReference type="InterPro" id="IPR001518">
    <property type="entry name" value="Arginosuc_synth"/>
</dbReference>
<dbReference type="InterPro" id="IPR018223">
    <property type="entry name" value="Arginosuc_synth_CS"/>
</dbReference>
<dbReference type="InterPro" id="IPR023434">
    <property type="entry name" value="Arginosuc_synth_type_1_subfam"/>
</dbReference>
<dbReference type="InterPro" id="IPR024074">
    <property type="entry name" value="AS_cat/multimer_dom_body"/>
</dbReference>
<dbReference type="InterPro" id="IPR024073">
    <property type="entry name" value="AS_multimer_C_tail"/>
</dbReference>
<dbReference type="InterPro" id="IPR014729">
    <property type="entry name" value="Rossmann-like_a/b/a_fold"/>
</dbReference>
<dbReference type="NCBIfam" id="TIGR00032">
    <property type="entry name" value="argG"/>
    <property type="match status" value="1"/>
</dbReference>
<dbReference type="NCBIfam" id="NF003779">
    <property type="entry name" value="PRK05370.1"/>
    <property type="match status" value="1"/>
</dbReference>
<dbReference type="PANTHER" id="PTHR11587">
    <property type="entry name" value="ARGININOSUCCINATE SYNTHASE"/>
    <property type="match status" value="1"/>
</dbReference>
<dbReference type="PANTHER" id="PTHR11587:SF2">
    <property type="entry name" value="ARGININOSUCCINATE SYNTHASE"/>
    <property type="match status" value="1"/>
</dbReference>
<dbReference type="Pfam" id="PF20979">
    <property type="entry name" value="Arginosuc_syn_C"/>
    <property type="match status" value="1"/>
</dbReference>
<dbReference type="Pfam" id="PF00764">
    <property type="entry name" value="Arginosuc_synth"/>
    <property type="match status" value="1"/>
</dbReference>
<dbReference type="SUPFAM" id="SSF52402">
    <property type="entry name" value="Adenine nucleotide alpha hydrolases-like"/>
    <property type="match status" value="1"/>
</dbReference>
<dbReference type="SUPFAM" id="SSF69864">
    <property type="entry name" value="Argininosuccinate synthetase, C-terminal domain"/>
    <property type="match status" value="1"/>
</dbReference>
<dbReference type="PROSITE" id="PS00564">
    <property type="entry name" value="ARGININOSUCCIN_SYN_1"/>
    <property type="match status" value="1"/>
</dbReference>
<dbReference type="PROSITE" id="PS00565">
    <property type="entry name" value="ARGININOSUCCIN_SYN_2"/>
    <property type="match status" value="1"/>
</dbReference>
<name>ASSY_SHIF8</name>
<evidence type="ECO:0000255" key="1">
    <source>
        <dbReference type="HAMAP-Rule" id="MF_00581"/>
    </source>
</evidence>
<accession>Q0T0B0</accession>
<protein>
    <recommendedName>
        <fullName evidence="1">Argininosuccinate synthase</fullName>
        <ecNumber evidence="1">6.3.4.5</ecNumber>
    </recommendedName>
    <alternativeName>
        <fullName evidence="1">Citrulline--aspartate ligase</fullName>
    </alternativeName>
</protein>
<gene>
    <name evidence="1" type="primary">argG</name>
    <name type="ordered locus">SFV_3202</name>
</gene>
<sequence length="447" mass="49960">MTTILKHLPVGQRIGIAFSGGLDTSAALLWMRQKGAVPYAYTANLGQPDEEDYDAIPRRAMEYGAENARLIDCRKQLVAEGIAAIQCGAFHNTTGGLTYFNTTPLGRAVTGTMLVAAMKEDGVNIWGDGSTYKGNDIERFYRYGLLTNAELQIYKPWLDTDFIDELGGRHEMSEFMIACGFDYKMSVEKAYSTDSNMLGATHEAKDLEYLNSSVKIVNPIMGVKFWDESVKIPAEEVTVRFEQGHPVALNGKTFSDDVEMMLEANRIGGRHGLGMSDQIENRIIEAKSRGIYEAPGMALLHIAYERLLTGIHNEDTIEQYHAHGRQLGRLLYQGRWFDSQALMLRDSLQRWVASQITGEVTLELRRGNDYSILNTVSENLTYKPERLTMEKGDSVFSPDDRIGQLTMRNLDITDTREKLFGYAKTGLLSSSATSGLPQVENMENKGQ</sequence>
<feature type="chain" id="PRO_1000025443" description="Argininosuccinate synthase">
    <location>
        <begin position="1"/>
        <end position="447"/>
    </location>
</feature>
<feature type="binding site" evidence="1">
    <location>
        <begin position="17"/>
        <end position="25"/>
    </location>
    <ligand>
        <name>ATP</name>
        <dbReference type="ChEBI" id="CHEBI:30616"/>
    </ligand>
</feature>
<feature type="binding site" evidence="1">
    <location>
        <position position="43"/>
    </location>
    <ligand>
        <name>ATP</name>
        <dbReference type="ChEBI" id="CHEBI:30616"/>
    </ligand>
</feature>
<feature type="binding site" evidence="1">
    <location>
        <position position="99"/>
    </location>
    <ligand>
        <name>L-citrulline</name>
        <dbReference type="ChEBI" id="CHEBI:57743"/>
    </ligand>
</feature>
<feature type="binding site" evidence="1">
    <location>
        <position position="129"/>
    </location>
    <ligand>
        <name>ATP</name>
        <dbReference type="ChEBI" id="CHEBI:30616"/>
    </ligand>
</feature>
<feature type="binding site" evidence="1">
    <location>
        <position position="131"/>
    </location>
    <ligand>
        <name>ATP</name>
        <dbReference type="ChEBI" id="CHEBI:30616"/>
    </ligand>
</feature>
<feature type="binding site" evidence="1">
    <location>
        <position position="131"/>
    </location>
    <ligand>
        <name>L-aspartate</name>
        <dbReference type="ChEBI" id="CHEBI:29991"/>
    </ligand>
</feature>
<feature type="binding site" evidence="1">
    <location>
        <position position="135"/>
    </location>
    <ligand>
        <name>L-aspartate</name>
        <dbReference type="ChEBI" id="CHEBI:29991"/>
    </ligand>
</feature>
<feature type="binding site" evidence="1">
    <location>
        <position position="135"/>
    </location>
    <ligand>
        <name>L-citrulline</name>
        <dbReference type="ChEBI" id="CHEBI:57743"/>
    </ligand>
</feature>
<feature type="binding site" evidence="1">
    <location>
        <position position="136"/>
    </location>
    <ligand>
        <name>ATP</name>
        <dbReference type="ChEBI" id="CHEBI:30616"/>
    </ligand>
</feature>
<feature type="binding site" evidence="1">
    <location>
        <position position="136"/>
    </location>
    <ligand>
        <name>L-aspartate</name>
        <dbReference type="ChEBI" id="CHEBI:29991"/>
    </ligand>
</feature>
<feature type="binding site" evidence="1">
    <location>
        <position position="139"/>
    </location>
    <ligand>
        <name>L-citrulline</name>
        <dbReference type="ChEBI" id="CHEBI:57743"/>
    </ligand>
</feature>
<feature type="binding site" evidence="1">
    <location>
        <position position="192"/>
    </location>
    <ligand>
        <name>L-citrulline</name>
        <dbReference type="ChEBI" id="CHEBI:57743"/>
    </ligand>
</feature>
<feature type="binding site" evidence="1">
    <location>
        <position position="194"/>
    </location>
    <ligand>
        <name>ATP</name>
        <dbReference type="ChEBI" id="CHEBI:30616"/>
    </ligand>
</feature>
<feature type="binding site" evidence="1">
    <location>
        <position position="201"/>
    </location>
    <ligand>
        <name>L-citrulline</name>
        <dbReference type="ChEBI" id="CHEBI:57743"/>
    </ligand>
</feature>
<feature type="binding site" evidence="1">
    <location>
        <position position="203"/>
    </location>
    <ligand>
        <name>L-citrulline</name>
        <dbReference type="ChEBI" id="CHEBI:57743"/>
    </ligand>
</feature>
<feature type="binding site" evidence="1">
    <location>
        <position position="280"/>
    </location>
    <ligand>
        <name>L-citrulline</name>
        <dbReference type="ChEBI" id="CHEBI:57743"/>
    </ligand>
</feature>
<keyword id="KW-0028">Amino-acid biosynthesis</keyword>
<keyword id="KW-0055">Arginine biosynthesis</keyword>
<keyword id="KW-0067">ATP-binding</keyword>
<keyword id="KW-0963">Cytoplasm</keyword>
<keyword id="KW-0436">Ligase</keyword>
<keyword id="KW-0547">Nucleotide-binding</keyword>
<proteinExistence type="inferred from homology"/>